<name>PYRE_NEIMB</name>
<keyword id="KW-0328">Glycosyltransferase</keyword>
<keyword id="KW-0460">Magnesium</keyword>
<keyword id="KW-0665">Pyrimidine biosynthesis</keyword>
<keyword id="KW-1185">Reference proteome</keyword>
<keyword id="KW-0808">Transferase</keyword>
<evidence type="ECO:0000255" key="1">
    <source>
        <dbReference type="HAMAP-Rule" id="MF_01208"/>
    </source>
</evidence>
<accession>P65915</accession>
<accession>Q9JR25</accession>
<reference key="1">
    <citation type="journal article" date="2000" name="Science">
        <title>Complete genome sequence of Neisseria meningitidis serogroup B strain MC58.</title>
        <authorList>
            <person name="Tettelin H."/>
            <person name="Saunders N.J."/>
            <person name="Heidelberg J.F."/>
            <person name="Jeffries A.C."/>
            <person name="Nelson K.E."/>
            <person name="Eisen J.A."/>
            <person name="Ketchum K.A."/>
            <person name="Hood D.W."/>
            <person name="Peden J.F."/>
            <person name="Dodson R.J."/>
            <person name="Nelson W.C."/>
            <person name="Gwinn M.L."/>
            <person name="DeBoy R.T."/>
            <person name="Peterson J.D."/>
            <person name="Hickey E.K."/>
            <person name="Haft D.H."/>
            <person name="Salzberg S.L."/>
            <person name="White O."/>
            <person name="Fleischmann R.D."/>
            <person name="Dougherty B.A."/>
            <person name="Mason T.M."/>
            <person name="Ciecko A."/>
            <person name="Parksey D.S."/>
            <person name="Blair E."/>
            <person name="Cittone H."/>
            <person name="Clark E.B."/>
            <person name="Cotton M.D."/>
            <person name="Utterback T.R."/>
            <person name="Khouri H.M."/>
            <person name="Qin H."/>
            <person name="Vamathevan J.J."/>
            <person name="Gill J."/>
            <person name="Scarlato V."/>
            <person name="Masignani V."/>
            <person name="Pizza M."/>
            <person name="Grandi G."/>
            <person name="Sun L."/>
            <person name="Smith H.O."/>
            <person name="Fraser C.M."/>
            <person name="Moxon E.R."/>
            <person name="Rappuoli R."/>
            <person name="Venter J.C."/>
        </authorList>
    </citation>
    <scope>NUCLEOTIDE SEQUENCE [LARGE SCALE GENOMIC DNA]</scope>
    <source>
        <strain>ATCC BAA-335 / MC58</strain>
    </source>
</reference>
<feature type="chain" id="PRO_0000110715" description="Orotate phosphoribosyltransferase">
    <location>
        <begin position="1"/>
        <end position="213"/>
    </location>
</feature>
<feature type="binding site" description="in other chain" evidence="1">
    <location>
        <position position="26"/>
    </location>
    <ligand>
        <name>5-phospho-alpha-D-ribose 1-diphosphate</name>
        <dbReference type="ChEBI" id="CHEBI:58017"/>
        <note>ligand shared between dimeric partners</note>
    </ligand>
</feature>
<feature type="binding site" evidence="1">
    <location>
        <begin position="34"/>
        <end position="35"/>
    </location>
    <ligand>
        <name>orotate</name>
        <dbReference type="ChEBI" id="CHEBI:30839"/>
    </ligand>
</feature>
<feature type="binding site" description="in other chain" evidence="1">
    <location>
        <begin position="72"/>
        <end position="73"/>
    </location>
    <ligand>
        <name>5-phospho-alpha-D-ribose 1-diphosphate</name>
        <dbReference type="ChEBI" id="CHEBI:58017"/>
        <note>ligand shared between dimeric partners</note>
    </ligand>
</feature>
<feature type="binding site" evidence="1">
    <location>
        <position position="98"/>
    </location>
    <ligand>
        <name>5-phospho-alpha-D-ribose 1-diphosphate</name>
        <dbReference type="ChEBI" id="CHEBI:58017"/>
        <note>ligand shared between dimeric partners</note>
    </ligand>
</feature>
<feature type="binding site" description="in other chain" evidence="1">
    <location>
        <position position="99"/>
    </location>
    <ligand>
        <name>5-phospho-alpha-D-ribose 1-diphosphate</name>
        <dbReference type="ChEBI" id="CHEBI:58017"/>
        <note>ligand shared between dimeric partners</note>
    </ligand>
</feature>
<feature type="binding site" evidence="1">
    <location>
        <position position="102"/>
    </location>
    <ligand>
        <name>5-phospho-alpha-D-ribose 1-diphosphate</name>
        <dbReference type="ChEBI" id="CHEBI:58017"/>
        <note>ligand shared between dimeric partners</note>
    </ligand>
</feature>
<feature type="binding site" evidence="1">
    <location>
        <position position="104"/>
    </location>
    <ligand>
        <name>5-phospho-alpha-D-ribose 1-diphosphate</name>
        <dbReference type="ChEBI" id="CHEBI:58017"/>
        <note>ligand shared between dimeric partners</note>
    </ligand>
</feature>
<feature type="binding site" description="in other chain" evidence="1">
    <location>
        <begin position="123"/>
        <end position="131"/>
    </location>
    <ligand>
        <name>5-phospho-alpha-D-ribose 1-diphosphate</name>
        <dbReference type="ChEBI" id="CHEBI:58017"/>
        <note>ligand shared between dimeric partners</note>
    </ligand>
</feature>
<feature type="binding site" evidence="1">
    <location>
        <position position="127"/>
    </location>
    <ligand>
        <name>orotate</name>
        <dbReference type="ChEBI" id="CHEBI:30839"/>
    </ligand>
</feature>
<feature type="binding site" evidence="1">
    <location>
        <position position="155"/>
    </location>
    <ligand>
        <name>orotate</name>
        <dbReference type="ChEBI" id="CHEBI:30839"/>
    </ligand>
</feature>
<organism>
    <name type="scientific">Neisseria meningitidis serogroup B (strain ATCC BAA-335 / MC58)</name>
    <dbReference type="NCBI Taxonomy" id="122586"/>
    <lineage>
        <taxon>Bacteria</taxon>
        <taxon>Pseudomonadati</taxon>
        <taxon>Pseudomonadota</taxon>
        <taxon>Betaproteobacteria</taxon>
        <taxon>Neisseriales</taxon>
        <taxon>Neisseriaceae</taxon>
        <taxon>Neisseria</taxon>
    </lineage>
</organism>
<proteinExistence type="inferred from homology"/>
<sequence>MTDFRQDFLKFSLAQNVLKFGEFTTKAGRRSPYFFNAGLFNDGLSTLQLAKFYAQSIIESGIRFDMLFGPAYKGIILAAATAMMLAEKGVNVPFAYNRKEAKDHGEGGVLVGAPLKGRVLIIDDVISAGTSVRESIKLIEAEGATPAGVAIALDRMEKGTGELSAVQEVEKQYGLPVAPIASLNDLFILLQNNPEFGQFLEPVRAYRRQYGVE</sequence>
<gene>
    <name evidence="1" type="primary">pyrE</name>
    <name type="ordered locus">NMB1874</name>
</gene>
<comment type="function">
    <text evidence="1">Catalyzes the transfer of a ribosyl phosphate group from 5-phosphoribose 1-diphosphate to orotate, leading to the formation of orotidine monophosphate (OMP).</text>
</comment>
<comment type="catalytic activity">
    <reaction evidence="1">
        <text>orotidine 5'-phosphate + diphosphate = orotate + 5-phospho-alpha-D-ribose 1-diphosphate</text>
        <dbReference type="Rhea" id="RHEA:10380"/>
        <dbReference type="ChEBI" id="CHEBI:30839"/>
        <dbReference type="ChEBI" id="CHEBI:33019"/>
        <dbReference type="ChEBI" id="CHEBI:57538"/>
        <dbReference type="ChEBI" id="CHEBI:58017"/>
        <dbReference type="EC" id="2.4.2.10"/>
    </reaction>
</comment>
<comment type="cofactor">
    <cofactor evidence="1">
        <name>Mg(2+)</name>
        <dbReference type="ChEBI" id="CHEBI:18420"/>
    </cofactor>
</comment>
<comment type="pathway">
    <text evidence="1">Pyrimidine metabolism; UMP biosynthesis via de novo pathway; UMP from orotate: step 1/2.</text>
</comment>
<comment type="subunit">
    <text evidence="1">Homodimer.</text>
</comment>
<comment type="similarity">
    <text evidence="1">Belongs to the purine/pyrimidine phosphoribosyltransferase family. PyrE subfamily.</text>
</comment>
<protein>
    <recommendedName>
        <fullName evidence="1">Orotate phosphoribosyltransferase</fullName>
        <shortName evidence="1">OPRT</shortName>
        <shortName evidence="1">OPRTase</shortName>
        <ecNumber evidence="1">2.4.2.10</ecNumber>
    </recommendedName>
</protein>
<dbReference type="EC" id="2.4.2.10" evidence="1"/>
<dbReference type="EMBL" id="AE002098">
    <property type="protein sequence ID" value="AAF42208.1"/>
    <property type="molecule type" value="Genomic_DNA"/>
</dbReference>
<dbReference type="PIR" id="H81032">
    <property type="entry name" value="H81032"/>
</dbReference>
<dbReference type="RefSeq" id="NP_274870.1">
    <property type="nucleotide sequence ID" value="NC_003112.2"/>
</dbReference>
<dbReference type="RefSeq" id="WP_002217982.1">
    <property type="nucleotide sequence ID" value="NC_003112.2"/>
</dbReference>
<dbReference type="SMR" id="P65915"/>
<dbReference type="FunCoup" id="P65915">
    <property type="interactions" value="431"/>
</dbReference>
<dbReference type="STRING" id="122586.NMB1874"/>
<dbReference type="PaxDb" id="122586-NMB1874"/>
<dbReference type="GeneID" id="93386781"/>
<dbReference type="KEGG" id="nme:NMB1874"/>
<dbReference type="PATRIC" id="fig|122586.8.peg.2395"/>
<dbReference type="HOGENOM" id="CLU_074878_0_1_4"/>
<dbReference type="InParanoid" id="P65915"/>
<dbReference type="OrthoDB" id="9779060at2"/>
<dbReference type="UniPathway" id="UPA00070">
    <property type="reaction ID" value="UER00119"/>
</dbReference>
<dbReference type="Proteomes" id="UP000000425">
    <property type="component" value="Chromosome"/>
</dbReference>
<dbReference type="GO" id="GO:0005737">
    <property type="term" value="C:cytoplasm"/>
    <property type="evidence" value="ECO:0000318"/>
    <property type="project" value="GO_Central"/>
</dbReference>
<dbReference type="GO" id="GO:0000287">
    <property type="term" value="F:magnesium ion binding"/>
    <property type="evidence" value="ECO:0007669"/>
    <property type="project" value="UniProtKB-UniRule"/>
</dbReference>
<dbReference type="GO" id="GO:0004588">
    <property type="term" value="F:orotate phosphoribosyltransferase activity"/>
    <property type="evidence" value="ECO:0000318"/>
    <property type="project" value="GO_Central"/>
</dbReference>
<dbReference type="GO" id="GO:0006207">
    <property type="term" value="P:'de novo' pyrimidine nucleobase biosynthetic process"/>
    <property type="evidence" value="ECO:0000318"/>
    <property type="project" value="GO_Central"/>
</dbReference>
<dbReference type="GO" id="GO:0044205">
    <property type="term" value="P:'de novo' UMP biosynthetic process"/>
    <property type="evidence" value="ECO:0007669"/>
    <property type="project" value="UniProtKB-UniRule"/>
</dbReference>
<dbReference type="GO" id="GO:0006221">
    <property type="term" value="P:pyrimidine nucleotide biosynthetic process"/>
    <property type="evidence" value="ECO:0000318"/>
    <property type="project" value="GO_Central"/>
</dbReference>
<dbReference type="GO" id="GO:0046132">
    <property type="term" value="P:pyrimidine ribonucleoside biosynthetic process"/>
    <property type="evidence" value="ECO:0000318"/>
    <property type="project" value="GO_Central"/>
</dbReference>
<dbReference type="CDD" id="cd06223">
    <property type="entry name" value="PRTases_typeI"/>
    <property type="match status" value="1"/>
</dbReference>
<dbReference type="FunFam" id="3.40.50.2020:FF:000008">
    <property type="entry name" value="Orotate phosphoribosyltransferase"/>
    <property type="match status" value="1"/>
</dbReference>
<dbReference type="Gene3D" id="3.40.50.2020">
    <property type="match status" value="1"/>
</dbReference>
<dbReference type="HAMAP" id="MF_01208">
    <property type="entry name" value="PyrE"/>
    <property type="match status" value="1"/>
</dbReference>
<dbReference type="InterPro" id="IPR023031">
    <property type="entry name" value="OPRT"/>
</dbReference>
<dbReference type="InterPro" id="IPR004467">
    <property type="entry name" value="Or_phspho_trans_dom"/>
</dbReference>
<dbReference type="InterPro" id="IPR000836">
    <property type="entry name" value="PRibTrfase_dom"/>
</dbReference>
<dbReference type="InterPro" id="IPR029057">
    <property type="entry name" value="PRTase-like"/>
</dbReference>
<dbReference type="NCBIfam" id="TIGR00336">
    <property type="entry name" value="pyrE"/>
    <property type="match status" value="1"/>
</dbReference>
<dbReference type="PANTHER" id="PTHR46683">
    <property type="entry name" value="OROTATE PHOSPHORIBOSYLTRANSFERASE 1-RELATED"/>
    <property type="match status" value="1"/>
</dbReference>
<dbReference type="PANTHER" id="PTHR46683:SF1">
    <property type="entry name" value="OROTATE PHOSPHORIBOSYLTRANSFERASE 1-RELATED"/>
    <property type="match status" value="1"/>
</dbReference>
<dbReference type="Pfam" id="PF00156">
    <property type="entry name" value="Pribosyltran"/>
    <property type="match status" value="1"/>
</dbReference>
<dbReference type="SUPFAM" id="SSF53271">
    <property type="entry name" value="PRTase-like"/>
    <property type="match status" value="1"/>
</dbReference>
<dbReference type="PROSITE" id="PS00103">
    <property type="entry name" value="PUR_PYR_PR_TRANSFER"/>
    <property type="match status" value="1"/>
</dbReference>